<accession>A0A0D5YL73</accession>
<reference key="1">
    <citation type="journal article" date="2015" name="J. Bacteriol.">
        <title>Resources for Genetic and Genomic Analysis of Emerging Pathogen Acinetobacter baumannii.</title>
        <authorList>
            <person name="Gallagher L.A."/>
            <person name="Ramage E."/>
            <person name="Weiss E.J."/>
            <person name="Radey M."/>
            <person name="Hayden H.S."/>
            <person name="Held K.G."/>
            <person name="Huse H.K."/>
            <person name="Zurawski D.V."/>
            <person name="Brittnacher M.J."/>
            <person name="Manoil C."/>
        </authorList>
    </citation>
    <scope>NUCLEOTIDE SEQUENCE [LARGE SCALE GENOMIC DNA]</scope>
    <source>
        <strain>AB5075-UW</strain>
    </source>
</reference>
<reference key="2">
    <citation type="journal article" date="2021" name="Nat. Commun.">
        <title>A Slam-dependent hemophore contributes to heme acquisition in the bacterial pathogen Acinetobacter baumannii.</title>
        <authorList>
            <person name="Bateman T.J."/>
            <person name="Shah M."/>
            <person name="Ho T.P."/>
            <person name="Shin H.E."/>
            <person name="Pan C."/>
            <person name="Harris G."/>
            <person name="Fegan J.E."/>
            <person name="Islam E.A."/>
            <person name="Ahn S.K."/>
            <person name="Hooda Y."/>
            <person name="Gray-Owen S.D."/>
            <person name="Chen W."/>
            <person name="Moraes T.F."/>
        </authorList>
    </citation>
    <scope>FUNCTION IN HEME UPTAKE AND IN VIRULENCE</scope>
    <scope>GENE CLUSTER</scope>
    <scope>DISRUPTION PHENOTYPE</scope>
    <source>
        <strain>AB5075</strain>
    </source>
</reference>
<feature type="chain" id="PRO_0000460999" description="Hemophilin receptor">
    <location>
        <begin position="1"/>
        <end position="1057"/>
    </location>
</feature>
<feature type="domain" description="TBDR plug" evidence="1">
    <location>
        <begin position="168"/>
        <end position="285"/>
    </location>
</feature>
<feature type="domain" description="TBDR beta-barrel" evidence="1">
    <location>
        <begin position="296"/>
        <end position="1057"/>
    </location>
</feature>
<evidence type="ECO:0000255" key="1">
    <source>
        <dbReference type="PROSITE-ProRule" id="PRU01360"/>
    </source>
</evidence>
<evidence type="ECO:0000269" key="2">
    <source>
    </source>
</evidence>
<evidence type="ECO:0000303" key="3">
    <source>
    </source>
</evidence>
<evidence type="ECO:0000312" key="4">
    <source>
        <dbReference type="EMBL" id="AKA32699.1"/>
    </source>
</evidence>
<organism>
    <name type="scientific">Acinetobacter baumannii</name>
    <dbReference type="NCBI Taxonomy" id="470"/>
    <lineage>
        <taxon>Bacteria</taxon>
        <taxon>Pseudomonadati</taxon>
        <taxon>Pseudomonadota</taxon>
        <taxon>Gammaproteobacteria</taxon>
        <taxon>Moraxellales</taxon>
        <taxon>Moraxellaceae</taxon>
        <taxon>Acinetobacter</taxon>
        <taxon>Acinetobacter calcoaceticus/baumannii complex</taxon>
    </lineage>
</organism>
<dbReference type="EMBL" id="CP008706">
    <property type="protein sequence ID" value="AKA32699.1"/>
    <property type="molecule type" value="Genomic_DNA"/>
</dbReference>
<dbReference type="RefSeq" id="WP_004715426.1">
    <property type="nucleotide sequence ID" value="NZ_WYAO01000005.1"/>
</dbReference>
<dbReference type="SMR" id="A0A0D5YL73"/>
<dbReference type="PATRIC" id="fig|470.1345.peg.2939"/>
<dbReference type="Proteomes" id="UP000032746">
    <property type="component" value="Chromosome"/>
</dbReference>
<dbReference type="GO" id="GO:0009279">
    <property type="term" value="C:cell outer membrane"/>
    <property type="evidence" value="ECO:0007669"/>
    <property type="project" value="UniProtKB-SubCell"/>
</dbReference>
<dbReference type="GO" id="GO:0015344">
    <property type="term" value="F:siderophore uptake transmembrane transporter activity"/>
    <property type="evidence" value="ECO:0007669"/>
    <property type="project" value="TreeGrafter"/>
</dbReference>
<dbReference type="Gene3D" id="3.55.50.30">
    <property type="match status" value="1"/>
</dbReference>
<dbReference type="Gene3D" id="2.40.170.20">
    <property type="entry name" value="TonB-dependent receptor, beta-barrel domain"/>
    <property type="match status" value="1"/>
</dbReference>
<dbReference type="Gene3D" id="2.170.130.10">
    <property type="entry name" value="TonB-dependent receptor, plug domain"/>
    <property type="match status" value="1"/>
</dbReference>
<dbReference type="InterPro" id="IPR012910">
    <property type="entry name" value="Plug_dom"/>
</dbReference>
<dbReference type="InterPro" id="IPR037066">
    <property type="entry name" value="Plug_dom_sf"/>
</dbReference>
<dbReference type="InterPro" id="IPR011662">
    <property type="entry name" value="Secretin/TonB_short_N"/>
</dbReference>
<dbReference type="InterPro" id="IPR039426">
    <property type="entry name" value="TonB-dep_rcpt-like"/>
</dbReference>
<dbReference type="InterPro" id="IPR000531">
    <property type="entry name" value="TonB-dep_rcpt_b-brl"/>
</dbReference>
<dbReference type="InterPro" id="IPR036942">
    <property type="entry name" value="TonB_rcpt_b-brl_sf"/>
</dbReference>
<dbReference type="PANTHER" id="PTHR30069:SF41">
    <property type="entry name" value="HEME_HEMOPEXIN UTILIZATION PROTEIN C"/>
    <property type="match status" value="1"/>
</dbReference>
<dbReference type="PANTHER" id="PTHR30069">
    <property type="entry name" value="TONB-DEPENDENT OUTER MEMBRANE RECEPTOR"/>
    <property type="match status" value="1"/>
</dbReference>
<dbReference type="Pfam" id="PF07715">
    <property type="entry name" value="Plug"/>
    <property type="match status" value="1"/>
</dbReference>
<dbReference type="Pfam" id="PF07660">
    <property type="entry name" value="STN"/>
    <property type="match status" value="1"/>
</dbReference>
<dbReference type="Pfam" id="PF00593">
    <property type="entry name" value="TonB_dep_Rec_b-barrel"/>
    <property type="match status" value="1"/>
</dbReference>
<dbReference type="SMART" id="SM00965">
    <property type="entry name" value="STN"/>
    <property type="match status" value="1"/>
</dbReference>
<dbReference type="SUPFAM" id="SSF56935">
    <property type="entry name" value="Porins"/>
    <property type="match status" value="1"/>
</dbReference>
<dbReference type="PROSITE" id="PS52016">
    <property type="entry name" value="TONB_DEPENDENT_REC_3"/>
    <property type="match status" value="1"/>
</dbReference>
<gene>
    <name evidence="3" type="primary">hphR</name>
    <name evidence="4" type="ORF">ABUW_2985</name>
</gene>
<protein>
    <recommendedName>
        <fullName evidence="3">Hemophilin receptor</fullName>
    </recommendedName>
    <alternativeName>
        <fullName evidence="3">TonB-dependent receptor HphR</fullName>
    </alternativeName>
</protein>
<comment type="function">
    <text evidence="2">Part of a high affinity heme acquisition system (PubMed:34725337). Functions as a gateway for heme entry into the bacterial cell, enabling growth on hemoprotein sources (PubMed:34725337). Can acquire heme directly from hemoprotein reservoirs, however, HphA likely enhances the efficiency of this process by delivering heme to HphR (PubMed:34725337). Is essential for virulence, bacterial dissemination and growth in the blood (PubMed:34725337).</text>
</comment>
<comment type="subcellular location">
    <subcellularLocation>
        <location evidence="1">Cell outer membrane</location>
        <topology evidence="1">Multi-pass membrane protein</topology>
    </subcellularLocation>
</comment>
<comment type="induction">
    <text evidence="2">Part of the hemO gene cluster.</text>
</comment>
<comment type="disruption phenotype">
    <text evidence="2">In a mouse pulmonary infection model, the mutant exhibits reduced bacterial lung burden, and is virtually undetectable in the spleen and blood (PubMed:34725337). In a systemic challenge, the mutant is avirulent (PubMed:34725337).</text>
</comment>
<comment type="similarity">
    <text evidence="1">Belongs to the TonB-dependent receptor family.</text>
</comment>
<keyword id="KW-0998">Cell outer membrane</keyword>
<keyword id="KW-0406">Ion transport</keyword>
<keyword id="KW-0408">Iron</keyword>
<keyword id="KW-0410">Iron transport</keyword>
<keyword id="KW-0472">Membrane</keyword>
<keyword id="KW-0675">Receptor</keyword>
<keyword id="KW-0798">TonB box</keyword>
<keyword id="KW-0812">Transmembrane</keyword>
<keyword id="KW-1134">Transmembrane beta strand</keyword>
<keyword id="KW-0813">Transport</keyword>
<keyword id="KW-0843">Virulence</keyword>
<proteinExistence type="evidence at protein level"/>
<name>HPHR_ACIBA</name>
<sequence>MKKVGTGQKRNRSIFRFSTLAFAIHAVSMGGLVVLPMQQAYAQTAGVKSYNIPAGRLANVLNQFAEQSGTSIAMDAQQLQGLHSLGLKGNFAVEQGFEQLLKSTEFNAVKVGQGYTLSKKSTPRVISSKVQATSLPPSSAVIEEDASVRLTPIVVYGKEDRDTEGYNKVYDANRSSVYAGKDYVERFKGTNPADVLQGMVGVYSGDARNSGALDPSVRGVQGVGRVPLTIDGTEQSIAVWRGYNGVNNRNYIDPNLIAGIEVIKGPSLERNTTTSVGGAVVVKTLEADDIVRPGKSFGAELKVEGSTNSIDPSLPDMSKVGQNYDDTTPWIDMNGSKYDPDIYKKNRTRSDNSHFSGDDLAGRLAIATKQDKFDLLAVYAVRERGNYFSGTHGAGYYKRATPDSSLDFIPYFAYAYQPGDEVPNTSSHMESWLLKGTYRPTDDQTLKLTYRDTKNIFGEIMPSRIVWGITPDLGVPQWPLSNIHSKAYSLEYKFKPENNRWIDFYANIWQTDTESQTYTRGGWPTTIDFRDNTIINTAISHSDNTRKGITVSNKTRLLDQLDLTLGGSFLKEKLTSDDVYGEFGPSYSLYQALPRAGRREEKTFDFNFNYRPVSWLSFDAGMRYRSYWAIDDFLNKSLQSEIDPSLNPLFTKKSRLKEYTFEYQTMPESYTSTQQRLINVLKQRYATKNPEWDGQLDTVPASESTLYNMIWSQKNTLSWKADANGQLSLADNPLNQLNASGQKYVVTGGNFMSVVDQVPVESADKVKDSGWAPQLGASIHLTPNSRIYARYAEEYRLPSLFESTVGFSAMLQYQAIKPEHAFNYEVGYVYDMRDWFSTARNADIKLAYYYNKTKNVIERDQNLIFTNMDEQKLSGLELQSRFDNGGFFTDLSVAYNLKNEVCDTNSAINKMILGGTVQTEQGLEFREPYQRCVDDGFPNGYLVTMATPELSFHGLLGARFFDEKLELGARATFYKAYESPLRKNNDASVNKGYYLNVPLAWDDTWIFDAYARYQVDDYNTVEFVGSNLSNQFYIDPLTRSAMAAPGRTMKISWTTKF</sequence>